<keyword id="KW-0050">Antiport</keyword>
<keyword id="KW-0256">Endoplasmic reticulum</keyword>
<keyword id="KW-0333">Golgi apparatus</keyword>
<keyword id="KW-0472">Membrane</keyword>
<keyword id="KW-1185">Reference proteome</keyword>
<keyword id="KW-0762">Sugar transport</keyword>
<keyword id="KW-0812">Transmembrane</keyword>
<keyword id="KW-1133">Transmembrane helix</keyword>
<keyword id="KW-0813">Transport</keyword>
<feature type="chain" id="PRO_0000415962" description="UDP-galactose/UDP-glucose transporter 3">
    <location>
        <begin position="1"/>
        <end position="331"/>
    </location>
</feature>
<feature type="transmembrane region" description="Helical" evidence="2">
    <location>
        <begin position="11"/>
        <end position="31"/>
    </location>
</feature>
<feature type="transmembrane region" description="Helical" evidence="2">
    <location>
        <begin position="49"/>
        <end position="69"/>
    </location>
</feature>
<feature type="transmembrane region" description="Helical" evidence="2">
    <location>
        <begin position="80"/>
        <end position="100"/>
    </location>
</feature>
<feature type="transmembrane region" description="Helical" evidence="2">
    <location>
        <begin position="112"/>
        <end position="132"/>
    </location>
</feature>
<feature type="transmembrane region" description="Helical" evidence="2">
    <location>
        <begin position="135"/>
        <end position="155"/>
    </location>
</feature>
<feature type="transmembrane region" description="Helical" evidence="2">
    <location>
        <begin position="170"/>
        <end position="190"/>
    </location>
</feature>
<feature type="transmembrane region" description="Helical" evidence="2">
    <location>
        <begin position="206"/>
        <end position="226"/>
    </location>
</feature>
<feature type="transmembrane region" description="Helical" evidence="2">
    <location>
        <begin position="245"/>
        <end position="265"/>
    </location>
</feature>
<feature type="short sequence motif" description="Di-lysine motif">
    <location>
        <begin position="327"/>
        <end position="331"/>
    </location>
</feature>
<feature type="sequence conflict" description="In Ref. 4; AAM66005." evidence="7" ref="4">
    <original>S</original>
    <variation>I</variation>
    <location>
        <position position="158"/>
    </location>
</feature>
<feature type="sequence conflict" description="In Ref. 4; AAM66005." evidence="7" ref="4">
    <original>QRM</original>
    <variation>L</variation>
    <location>
        <begin position="323"/>
        <end position="325"/>
    </location>
</feature>
<organism>
    <name type="scientific">Arabidopsis thaliana</name>
    <name type="common">Mouse-ear cress</name>
    <dbReference type="NCBI Taxonomy" id="3702"/>
    <lineage>
        <taxon>Eukaryota</taxon>
        <taxon>Viridiplantae</taxon>
        <taxon>Streptophyta</taxon>
        <taxon>Embryophyta</taxon>
        <taxon>Tracheophyta</taxon>
        <taxon>Spermatophyta</taxon>
        <taxon>Magnoliopsida</taxon>
        <taxon>eudicotyledons</taxon>
        <taxon>Gunneridae</taxon>
        <taxon>Pentapetalae</taxon>
        <taxon>rosids</taxon>
        <taxon>malvids</taxon>
        <taxon>Brassicales</taxon>
        <taxon>Brassicaceae</taxon>
        <taxon>Camelineae</taxon>
        <taxon>Arabidopsis</taxon>
    </lineage>
</organism>
<comment type="function">
    <text evidence="3 4">Essential sugar transporter required for the transport of UDP-glucose from the cytoplasm into the Golgi and the endoplasmic reticulum. Essential for pollen development and involved in embryo sac progress.</text>
</comment>
<comment type="biophysicochemical properties">
    <kinetics>
        <KM evidence="4">6.4 uM for UDP-glucose</KM>
        <Vmax evidence="4">4.2 pmol/min/mg enzyme with UDP-glucose as substrate</Vmax>
    </kinetics>
</comment>
<comment type="subcellular location">
    <subcellularLocation>
        <location evidence="4">Endoplasmic reticulum membrane</location>
        <topology evidence="4">Multi-pass membrane protein</topology>
    </subcellularLocation>
    <subcellularLocation>
        <location evidence="4">Golgi apparatus membrane</location>
        <topology evidence="4">Multi-pass membrane protein</topology>
    </subcellularLocation>
</comment>
<comment type="tissue specificity">
    <text evidence="4">Mostly expressed in flowers, and, to a lower extent, in roots, stems and leaves.</text>
</comment>
<comment type="induction">
    <text evidence="4">Up-regulated by stimuli that trigger unfolded protein accumulation in the ER (UPR) (e.g. DTT or tunicamycin).</text>
</comment>
<comment type="domain">
    <text evidence="1">The di-lysine motif confers endoplasmic reticulum localization for type I membrane proteins.</text>
</comment>
<comment type="disruption phenotype">
    <text evidence="4">Lethal.</text>
</comment>
<comment type="miscellaneous">
    <text>Suppressor of the Yeast snf4 mutation that is impaired in sugar trophism.</text>
</comment>
<comment type="similarity">
    <text evidence="7">Belongs to the nucleotide-sugar transporter family. UDP-galactose:UMP antiporter (TC 2.A.7.11) subfamily.</text>
</comment>
<reference key="1">
    <citation type="journal article" date="2000" name="Nature">
        <title>Sequence and analysis of chromosome 1 of the plant Arabidopsis thaliana.</title>
        <authorList>
            <person name="Theologis A."/>
            <person name="Ecker J.R."/>
            <person name="Palm C.J."/>
            <person name="Federspiel N.A."/>
            <person name="Kaul S."/>
            <person name="White O."/>
            <person name="Alonso J."/>
            <person name="Altafi H."/>
            <person name="Araujo R."/>
            <person name="Bowman C.L."/>
            <person name="Brooks S.Y."/>
            <person name="Buehler E."/>
            <person name="Chan A."/>
            <person name="Chao Q."/>
            <person name="Chen H."/>
            <person name="Cheuk R.F."/>
            <person name="Chin C.W."/>
            <person name="Chung M.K."/>
            <person name="Conn L."/>
            <person name="Conway A.B."/>
            <person name="Conway A.R."/>
            <person name="Creasy T.H."/>
            <person name="Dewar K."/>
            <person name="Dunn P."/>
            <person name="Etgu P."/>
            <person name="Feldblyum T.V."/>
            <person name="Feng J.-D."/>
            <person name="Fong B."/>
            <person name="Fujii C.Y."/>
            <person name="Gill J.E."/>
            <person name="Goldsmith A.D."/>
            <person name="Haas B."/>
            <person name="Hansen N.F."/>
            <person name="Hughes B."/>
            <person name="Huizar L."/>
            <person name="Hunter J.L."/>
            <person name="Jenkins J."/>
            <person name="Johnson-Hopson C."/>
            <person name="Khan S."/>
            <person name="Khaykin E."/>
            <person name="Kim C.J."/>
            <person name="Koo H.L."/>
            <person name="Kremenetskaia I."/>
            <person name="Kurtz D.B."/>
            <person name="Kwan A."/>
            <person name="Lam B."/>
            <person name="Langin-Hooper S."/>
            <person name="Lee A."/>
            <person name="Lee J.M."/>
            <person name="Lenz C.A."/>
            <person name="Li J.H."/>
            <person name="Li Y.-P."/>
            <person name="Lin X."/>
            <person name="Liu S.X."/>
            <person name="Liu Z.A."/>
            <person name="Luros J.S."/>
            <person name="Maiti R."/>
            <person name="Marziali A."/>
            <person name="Militscher J."/>
            <person name="Miranda M."/>
            <person name="Nguyen M."/>
            <person name="Nierman W.C."/>
            <person name="Osborne B.I."/>
            <person name="Pai G."/>
            <person name="Peterson J."/>
            <person name="Pham P.K."/>
            <person name="Rizzo M."/>
            <person name="Rooney T."/>
            <person name="Rowley D."/>
            <person name="Sakano H."/>
            <person name="Salzberg S.L."/>
            <person name="Schwartz J.R."/>
            <person name="Shinn P."/>
            <person name="Southwick A.M."/>
            <person name="Sun H."/>
            <person name="Tallon L.J."/>
            <person name="Tambunga G."/>
            <person name="Toriumi M.J."/>
            <person name="Town C.D."/>
            <person name="Utterback T."/>
            <person name="Van Aken S."/>
            <person name="Vaysberg M."/>
            <person name="Vysotskaia V.S."/>
            <person name="Walker M."/>
            <person name="Wu D."/>
            <person name="Yu G."/>
            <person name="Fraser C.M."/>
            <person name="Venter J.C."/>
            <person name="Davis R.W."/>
        </authorList>
    </citation>
    <scope>NUCLEOTIDE SEQUENCE [LARGE SCALE GENOMIC DNA]</scope>
    <source>
        <strain>cv. Columbia</strain>
    </source>
</reference>
<reference key="2">
    <citation type="journal article" date="2017" name="Plant J.">
        <title>Araport11: a complete reannotation of the Arabidopsis thaliana reference genome.</title>
        <authorList>
            <person name="Cheng C.Y."/>
            <person name="Krishnakumar V."/>
            <person name="Chan A.P."/>
            <person name="Thibaud-Nissen F."/>
            <person name="Schobel S."/>
            <person name="Town C.D."/>
        </authorList>
    </citation>
    <scope>GENOME REANNOTATION</scope>
    <source>
        <strain>cv. Columbia</strain>
    </source>
</reference>
<reference key="3">
    <citation type="journal article" date="2003" name="Science">
        <title>Empirical analysis of transcriptional activity in the Arabidopsis genome.</title>
        <authorList>
            <person name="Yamada K."/>
            <person name="Lim J."/>
            <person name="Dale J.M."/>
            <person name="Chen H."/>
            <person name="Shinn P."/>
            <person name="Palm C.J."/>
            <person name="Southwick A.M."/>
            <person name="Wu H.C."/>
            <person name="Kim C.J."/>
            <person name="Nguyen M."/>
            <person name="Pham P.K."/>
            <person name="Cheuk R.F."/>
            <person name="Karlin-Newmann G."/>
            <person name="Liu S.X."/>
            <person name="Lam B."/>
            <person name="Sakano H."/>
            <person name="Wu T."/>
            <person name="Yu G."/>
            <person name="Miranda M."/>
            <person name="Quach H.L."/>
            <person name="Tripp M."/>
            <person name="Chang C.H."/>
            <person name="Lee J.M."/>
            <person name="Toriumi M.J."/>
            <person name="Chan M.M."/>
            <person name="Tang C.C."/>
            <person name="Onodera C.S."/>
            <person name="Deng J.M."/>
            <person name="Akiyama K."/>
            <person name="Ansari Y."/>
            <person name="Arakawa T."/>
            <person name="Banh J."/>
            <person name="Banno F."/>
            <person name="Bowser L."/>
            <person name="Brooks S.Y."/>
            <person name="Carninci P."/>
            <person name="Chao Q."/>
            <person name="Choy N."/>
            <person name="Enju A."/>
            <person name="Goldsmith A.D."/>
            <person name="Gurjal M."/>
            <person name="Hansen N.F."/>
            <person name="Hayashizaki Y."/>
            <person name="Johnson-Hopson C."/>
            <person name="Hsuan V.W."/>
            <person name="Iida K."/>
            <person name="Karnes M."/>
            <person name="Khan S."/>
            <person name="Koesema E."/>
            <person name="Ishida J."/>
            <person name="Jiang P.X."/>
            <person name="Jones T."/>
            <person name="Kawai J."/>
            <person name="Kamiya A."/>
            <person name="Meyers C."/>
            <person name="Nakajima M."/>
            <person name="Narusaka M."/>
            <person name="Seki M."/>
            <person name="Sakurai T."/>
            <person name="Satou M."/>
            <person name="Tamse R."/>
            <person name="Vaysberg M."/>
            <person name="Wallender E.K."/>
            <person name="Wong C."/>
            <person name="Yamamura Y."/>
            <person name="Yuan S."/>
            <person name="Shinozaki K."/>
            <person name="Davis R.W."/>
            <person name="Theologis A."/>
            <person name="Ecker J.R."/>
        </authorList>
    </citation>
    <scope>NUCLEOTIDE SEQUENCE [LARGE SCALE MRNA]</scope>
    <source>
        <strain>cv. Columbia</strain>
    </source>
</reference>
<reference key="4">
    <citation type="submission" date="2002-03" db="EMBL/GenBank/DDBJ databases">
        <title>Full-length cDNA from Arabidopsis thaliana.</title>
        <authorList>
            <person name="Brover V.V."/>
            <person name="Troukhan M.E."/>
            <person name="Alexandrov N.A."/>
            <person name="Lu Y.-P."/>
            <person name="Flavell R.B."/>
            <person name="Feldmann K.A."/>
        </authorList>
    </citation>
    <scope>NUCLEOTIDE SEQUENCE [LARGE SCALE MRNA]</scope>
</reference>
<reference key="5">
    <citation type="journal article" date="2000" name="Plant J.">
        <title>Functional identification of an Arabidopsis Snf4 ortholog by screening for heterologous multicopy suppressors of snf4 deficiency in yeast.</title>
        <authorList>
            <person name="Kleinow T."/>
            <person name="Bhalerao R."/>
            <person name="Breuer F."/>
            <person name="Umeda M."/>
            <person name="Salchert K."/>
            <person name="Koncz C."/>
        </authorList>
    </citation>
    <scope>NUCLEOTIDE SEQUENCE [MRNA] OF 141-331</scope>
    <scope>FUNCTION</scope>
</reference>
<reference key="6">
    <citation type="journal article" date="2002" name="J. Biol. Chem.">
        <title>Transport of UDP-galactose in plants. Identification and functional characterization of AtUTr1, an Arabidopsis thaliana UDP-galactose/UDP-glucose transporter.</title>
        <authorList>
            <person name="Norambuena L."/>
            <person name="Marchant L."/>
            <person name="Berninsone P."/>
            <person name="Hirschberg C.B."/>
            <person name="Silva H."/>
            <person name="Orellana A."/>
        </authorList>
    </citation>
    <scope>GENE FAMILY</scope>
    <scope>NOMENCLATURE</scope>
</reference>
<reference key="7">
    <citation type="journal article" date="2005" name="Glycobiology">
        <title>Molecular cloning of two Arabidopsis UDP-galactose transporters by complementation of a deficient Chinese hamster ovary cell line.</title>
        <authorList>
            <person name="Bakker H."/>
            <person name="Routier F."/>
            <person name="Oelmann S."/>
            <person name="Jordi W."/>
            <person name="Lommen A."/>
            <person name="Gerardy-Schahn R."/>
            <person name="Bosch D."/>
        </authorList>
    </citation>
    <scope>GENE FAMILY</scope>
    <source>
        <strain>cv. Columbia</strain>
    </source>
</reference>
<reference key="8">
    <citation type="journal article" date="2010" name="Plant J.">
        <title>The nucleotide sugar transporters AtUTr1 and AtUTr3 are required for the incorporation of UDP-glucose into the endoplasmic reticulum, are essential for pollen development and are needed for embryo sac progress in Arabidopsis thaliana.</title>
        <authorList>
            <person name="Reyes F."/>
            <person name="Leon G."/>
            <person name="Donoso M."/>
            <person name="Brandizzi F."/>
            <person name="Weber A.P."/>
            <person name="Orellana A."/>
        </authorList>
    </citation>
    <scope>FUNCTION AS UDP-GLUCOSE TRANSPORTER</scope>
    <scope>DISRUPTION PHENOTYPE</scope>
    <scope>SUBCELLULAR LOCATION</scope>
    <scope>TISSUE SPECIFICITY</scope>
    <scope>INDUCTION</scope>
    <scope>BIOPHYSICOCHEMICAL PROPERTIES</scope>
    <source>
        <strain>cv. Columbia</strain>
        <strain>cv. Landsberg erecta</strain>
        <strain>cv. No-0</strain>
    </source>
</reference>
<reference key="9">
    <citation type="journal article" date="2014" name="Proc. Natl. Acad. Sci. U.S.A.">
        <title>The Golgi localized bifunctional UDP-rhamnose/UDP-galactose transporter family of Arabidopsis.</title>
        <authorList>
            <person name="Rautengarten C."/>
            <person name="Ebert B."/>
            <person name="Moreno I."/>
            <person name="Temple H."/>
            <person name="Herter T."/>
            <person name="Link B."/>
            <person name="Donas-Cofre D."/>
            <person name="Moreno A."/>
            <person name="Saez-Aguayo S."/>
            <person name="Blanco F."/>
            <person name="Mortimer J.C."/>
            <person name="Schultink A."/>
            <person name="Reiter W.D."/>
            <person name="Dupree P."/>
            <person name="Pauly M."/>
            <person name="Heazlewood J.L."/>
            <person name="Scheller H.V."/>
            <person name="Orellana A."/>
        </authorList>
    </citation>
    <scope>GENE FAMILY</scope>
</reference>
<accession>Q9M9S6</accession>
<accession>Q8L9F0</accession>
<accession>Q9FV57</accession>
<sequence>MESHGSGLRRVLLLSFCVAGIWAAYIYQGILQETLSTKKFGEDGKRFEHLAFLNLAQNVICLVWSYIMIKLWSNGGSGGAPWWTYWSAGITNTIGPAMGIEALKYISYPAQVLAKSSKMIPVMLMGSLVYGIRYTLPEYLCTFLVAGGVSMFALLKTSSKTISKLAHPNAPLGYGLCFLNLAFDGFTNATQDSITARYPKTNAWDIMLGMNLWGTIYNMVYMFGLPHGSGFEAVQFCKQHPEAAWDILMYCLCGAVGQNFIFLTISRFGSLANTTITTTRKFVSIVVSSVLSGNPLSSKQWGCVSMVFGGLSYQIYLKWRKLQRMQKKKKA</sequence>
<protein>
    <recommendedName>
        <fullName evidence="6">UDP-galactose/UDP-glucose transporter 3</fullName>
        <shortName evidence="6">AtUTr3</shortName>
    </recommendedName>
</protein>
<proteinExistence type="evidence at protein level"/>
<name>UTR3_ARATH</name>
<dbReference type="EMBL" id="AC012188">
    <property type="protein sequence ID" value="AAF43936.1"/>
    <property type="molecule type" value="Genomic_DNA"/>
</dbReference>
<dbReference type="EMBL" id="CP002684">
    <property type="protein sequence ID" value="AEE29152.1"/>
    <property type="molecule type" value="Genomic_DNA"/>
</dbReference>
<dbReference type="EMBL" id="AF332450">
    <property type="protein sequence ID" value="AAG48813.1"/>
    <property type="molecule type" value="mRNA"/>
</dbReference>
<dbReference type="EMBL" id="AY059942">
    <property type="protein sequence ID" value="AAL24424.1"/>
    <property type="molecule type" value="mRNA"/>
</dbReference>
<dbReference type="EMBL" id="AY114599">
    <property type="protein sequence ID" value="AAM47918.1"/>
    <property type="molecule type" value="mRNA"/>
</dbReference>
<dbReference type="EMBL" id="AY088469">
    <property type="protein sequence ID" value="AAM66005.1"/>
    <property type="molecule type" value="mRNA"/>
</dbReference>
<dbReference type="EMBL" id="AF250341">
    <property type="protein sequence ID" value="AAG10147.1"/>
    <property type="molecule type" value="mRNA"/>
</dbReference>
<dbReference type="PIR" id="A86278">
    <property type="entry name" value="A86278"/>
</dbReference>
<dbReference type="RefSeq" id="NP_563949.1">
    <property type="nucleotide sequence ID" value="NM_101303.4"/>
</dbReference>
<dbReference type="SMR" id="Q9M9S6"/>
<dbReference type="BioGRID" id="23238">
    <property type="interactions" value="77"/>
</dbReference>
<dbReference type="FunCoup" id="Q9M9S6">
    <property type="interactions" value="2577"/>
</dbReference>
<dbReference type="IntAct" id="Q9M9S6">
    <property type="interactions" value="78"/>
</dbReference>
<dbReference type="STRING" id="3702.Q9M9S6"/>
<dbReference type="PaxDb" id="3702-AT1G14360.1"/>
<dbReference type="ProteomicsDB" id="228567"/>
<dbReference type="EnsemblPlants" id="AT1G14360.1">
    <property type="protein sequence ID" value="AT1G14360.1"/>
    <property type="gene ID" value="AT1G14360"/>
</dbReference>
<dbReference type="GeneID" id="837998"/>
<dbReference type="Gramene" id="AT1G14360.1">
    <property type="protein sequence ID" value="AT1G14360.1"/>
    <property type="gene ID" value="AT1G14360"/>
</dbReference>
<dbReference type="KEGG" id="ath:AT1G14360"/>
<dbReference type="Araport" id="AT1G14360"/>
<dbReference type="TAIR" id="AT1G14360">
    <property type="gene designation" value="UTR3"/>
</dbReference>
<dbReference type="eggNOG" id="KOG1581">
    <property type="taxonomic scope" value="Eukaryota"/>
</dbReference>
<dbReference type="HOGENOM" id="CLU_036019_0_1_1"/>
<dbReference type="InParanoid" id="Q9M9S6"/>
<dbReference type="OMA" id="CGAIGQV"/>
<dbReference type="PhylomeDB" id="Q9M9S6"/>
<dbReference type="SABIO-RK" id="Q9M9S6"/>
<dbReference type="PRO" id="PR:Q9M9S6"/>
<dbReference type="Proteomes" id="UP000006548">
    <property type="component" value="Chromosome 1"/>
</dbReference>
<dbReference type="ExpressionAtlas" id="Q9M9S6">
    <property type="expression patterns" value="baseline and differential"/>
</dbReference>
<dbReference type="GO" id="GO:0005789">
    <property type="term" value="C:endoplasmic reticulum membrane"/>
    <property type="evidence" value="ECO:0000314"/>
    <property type="project" value="UniProtKB"/>
</dbReference>
<dbReference type="GO" id="GO:0000139">
    <property type="term" value="C:Golgi membrane"/>
    <property type="evidence" value="ECO:0000314"/>
    <property type="project" value="UniProtKB"/>
</dbReference>
<dbReference type="GO" id="GO:0015297">
    <property type="term" value="F:antiporter activity"/>
    <property type="evidence" value="ECO:0007669"/>
    <property type="project" value="UniProtKB-KW"/>
</dbReference>
<dbReference type="GO" id="GO:0005460">
    <property type="term" value="F:UDP-glucose transmembrane transporter activity"/>
    <property type="evidence" value="ECO:0000314"/>
    <property type="project" value="UniProtKB"/>
</dbReference>
<dbReference type="GO" id="GO:0009553">
    <property type="term" value="P:embryo sac development"/>
    <property type="evidence" value="ECO:0000315"/>
    <property type="project" value="UniProtKB"/>
</dbReference>
<dbReference type="GO" id="GO:0030968">
    <property type="term" value="P:endoplasmic reticulum unfolded protein response"/>
    <property type="evidence" value="ECO:0000270"/>
    <property type="project" value="UniProtKB"/>
</dbReference>
<dbReference type="GO" id="GO:0009555">
    <property type="term" value="P:pollen development"/>
    <property type="evidence" value="ECO:0000315"/>
    <property type="project" value="UniProtKB"/>
</dbReference>
<dbReference type="InterPro" id="IPR013657">
    <property type="entry name" value="SCL35B1-4/HUT1"/>
</dbReference>
<dbReference type="PANTHER" id="PTHR10778">
    <property type="entry name" value="SOLUTE CARRIER FAMILY 35 MEMBER B"/>
    <property type="match status" value="1"/>
</dbReference>
<dbReference type="PANTHER" id="PTHR10778:SF10">
    <property type="entry name" value="SOLUTE CARRIER FAMILY 35 MEMBER B1"/>
    <property type="match status" value="1"/>
</dbReference>
<dbReference type="Pfam" id="PF08449">
    <property type="entry name" value="UAA"/>
    <property type="match status" value="1"/>
</dbReference>
<evidence type="ECO:0000250" key="1"/>
<evidence type="ECO:0000255" key="2"/>
<evidence type="ECO:0000269" key="3">
    <source>
    </source>
</evidence>
<evidence type="ECO:0000269" key="4">
    <source>
    </source>
</evidence>
<evidence type="ECO:0000303" key="5">
    <source>
    </source>
</evidence>
<evidence type="ECO:0000303" key="6">
    <source>
    </source>
</evidence>
<evidence type="ECO:0000305" key="7"/>
<evidence type="ECO:0000312" key="8">
    <source>
        <dbReference type="Araport" id="AT1G14360"/>
    </source>
</evidence>
<evidence type="ECO:0000312" key="9">
    <source>
        <dbReference type="EMBL" id="AAF43936.1"/>
    </source>
</evidence>
<gene>
    <name evidence="6" type="primary">UTR3</name>
    <name evidence="5" type="synonym">MSS4</name>
    <name evidence="8" type="ordered locus">At1g14360</name>
    <name evidence="9" type="ORF">F14L17.13</name>
</gene>